<comment type="function">
    <text evidence="1">Part of the endoplasmic reticulum membrane protein complex (EMC) that enables the energy-independent insertion into endoplasmic reticulum membranes of newly synthesized membrane proteins. Preferentially accommodates proteins with transmembrane domains that are weakly hydrophobic or contain destabilizing features such as charged and aromatic residues. Involved in the cotranslational insertion of multi-pass membrane proteins in which stop-transfer membrane-anchor sequences become ER membrane spanning helices. It is also required for the post-translational insertion of tail-anchored/TA proteins in endoplasmic reticulum membranes. By mediating the proper cotranslational insertion of N-terminal transmembrane domains in an N-exo topology, with translocated N-terminus in the lumen of the ER, controls the topology of multi-pass membrane proteins. By regulating the insertion of various proteins in membranes, it is indirectly involved in many cellular processes.</text>
</comment>
<comment type="subunit">
    <text evidence="1">Component of the ER membrane protein complex (EMC).</text>
</comment>
<comment type="subcellular location">
    <subcellularLocation>
        <location evidence="1">Endoplasmic reticulum membrane</location>
        <topology evidence="1">Peripheral membrane protein</topology>
        <orientation evidence="1">Cytoplasmic side</orientation>
    </subcellularLocation>
</comment>
<comment type="similarity">
    <text evidence="3">Belongs to the EMC2 family.</text>
</comment>
<evidence type="ECO:0000250" key="1">
    <source>
        <dbReference type="UniProtKB" id="Q15006"/>
    </source>
</evidence>
<evidence type="ECO:0000255" key="2"/>
<evidence type="ECO:0000305" key="3"/>
<reference key="1">
    <citation type="submission" date="2006-10" db="EMBL/GenBank/DDBJ databases">
        <authorList>
            <consortium name="Sanger Xenopus tropicalis EST/cDNA project"/>
        </authorList>
    </citation>
    <scope>NUCLEOTIDE SEQUENCE [LARGE SCALE MRNA]</scope>
    <source>
        <tissue>Egg</tissue>
    </source>
</reference>
<reference key="2">
    <citation type="submission" date="2004-12" db="EMBL/GenBank/DDBJ databases">
        <authorList>
            <consortium name="NIH - Xenopus Gene Collection (XGC) project"/>
        </authorList>
    </citation>
    <scope>NUCLEOTIDE SEQUENCE [LARGE SCALE MRNA]</scope>
    <source>
        <tissue>Embryo</tissue>
    </source>
</reference>
<gene>
    <name type="primary">emc2</name>
    <name type="synonym">ttc35</name>
    <name type="ORF">TEgg055h07.1</name>
</gene>
<keyword id="KW-0256">Endoplasmic reticulum</keyword>
<keyword id="KW-0472">Membrane</keyword>
<keyword id="KW-1185">Reference proteome</keyword>
<keyword id="KW-0677">Repeat</keyword>
<keyword id="KW-0802">TPR repeat</keyword>
<organism>
    <name type="scientific">Xenopus tropicalis</name>
    <name type="common">Western clawed frog</name>
    <name type="synonym">Silurana tropicalis</name>
    <dbReference type="NCBI Taxonomy" id="8364"/>
    <lineage>
        <taxon>Eukaryota</taxon>
        <taxon>Metazoa</taxon>
        <taxon>Chordata</taxon>
        <taxon>Craniata</taxon>
        <taxon>Vertebrata</taxon>
        <taxon>Euteleostomi</taxon>
        <taxon>Amphibia</taxon>
        <taxon>Batrachia</taxon>
        <taxon>Anura</taxon>
        <taxon>Pipoidea</taxon>
        <taxon>Pipidae</taxon>
        <taxon>Xenopodinae</taxon>
        <taxon>Xenopus</taxon>
        <taxon>Silurana</taxon>
    </lineage>
</organism>
<name>EMC2_XENTR</name>
<proteinExistence type="evidence at transcript level"/>
<sequence length="297" mass="34624">MSKVSDLYDVTWEDMRDKMKTWREENYRNSEHVIEVGEELINEHASKLGDDIWIIYEQVMIAALDCGRDDIAMSCLQELRRQFPGSHRVKRLTGLRFEAMERYDDALQIYDRILQDDPTNTAARKRKIAIRKAQGRNAEAIRELNEYLEQFVGDQEAWHELAELYINELDYAKAAFCLEELILTNPHNHFYYQQFAEVKYTQGGLENLELSRKYFSQALKLNNHNMRALFGLYISSVHIASNPKASAKMKKDNVKYATWATSQIKKAYQLAGRTMTDTQTSLKAVEDMLETLQITQS</sequence>
<protein>
    <recommendedName>
        <fullName evidence="3">ER membrane protein complex subunit 2</fullName>
    </recommendedName>
    <alternativeName>
        <fullName>Tetratricopeptide repeat protein 35</fullName>
        <shortName>TPR repeat protein 35</shortName>
    </alternativeName>
</protein>
<dbReference type="EMBL" id="CR848509">
    <property type="protein sequence ID" value="CAJ82313.1"/>
    <property type="molecule type" value="mRNA"/>
</dbReference>
<dbReference type="EMBL" id="BC088602">
    <property type="protein sequence ID" value="AAH88602.1"/>
    <property type="molecule type" value="mRNA"/>
</dbReference>
<dbReference type="RefSeq" id="NP_001011398.1">
    <property type="nucleotide sequence ID" value="NM_001011398.1"/>
</dbReference>
<dbReference type="SMR" id="Q5M7J9"/>
<dbReference type="FunCoup" id="Q5M7J9">
    <property type="interactions" value="2281"/>
</dbReference>
<dbReference type="STRING" id="8364.ENSXETP00000022781"/>
<dbReference type="PaxDb" id="8364-ENSXETP00000007770"/>
<dbReference type="GeneID" id="496871"/>
<dbReference type="KEGG" id="xtr:496871"/>
<dbReference type="AGR" id="Xenbase:XB-GENE-484487"/>
<dbReference type="CTD" id="9694"/>
<dbReference type="Xenbase" id="XB-GENE-484487">
    <property type="gene designation" value="emc2"/>
</dbReference>
<dbReference type="eggNOG" id="KOG3060">
    <property type="taxonomic scope" value="Eukaryota"/>
</dbReference>
<dbReference type="InParanoid" id="Q5M7J9"/>
<dbReference type="OMA" id="MSDQEGW"/>
<dbReference type="OrthoDB" id="124397at2759"/>
<dbReference type="PhylomeDB" id="Q5M7J9"/>
<dbReference type="Proteomes" id="UP000008143">
    <property type="component" value="Chromosome 6"/>
</dbReference>
<dbReference type="Bgee" id="ENSXETG00000003604">
    <property type="expression patterns" value="Expressed in testis and 14 other cell types or tissues"/>
</dbReference>
<dbReference type="ExpressionAtlas" id="Q5M7J9">
    <property type="expression patterns" value="baseline"/>
</dbReference>
<dbReference type="GO" id="GO:0005737">
    <property type="term" value="C:cytoplasm"/>
    <property type="evidence" value="ECO:0000250"/>
    <property type="project" value="UniProtKB"/>
</dbReference>
<dbReference type="GO" id="GO:0072546">
    <property type="term" value="C:EMC complex"/>
    <property type="evidence" value="ECO:0000250"/>
    <property type="project" value="UniProtKB"/>
</dbReference>
<dbReference type="GO" id="GO:0005783">
    <property type="term" value="C:endoplasmic reticulum"/>
    <property type="evidence" value="ECO:0000250"/>
    <property type="project" value="UniProtKB"/>
</dbReference>
<dbReference type="GO" id="GO:0005789">
    <property type="term" value="C:endoplasmic reticulum membrane"/>
    <property type="evidence" value="ECO:0000250"/>
    <property type="project" value="UniProtKB"/>
</dbReference>
<dbReference type="GO" id="GO:0042406">
    <property type="term" value="C:extrinsic component of endoplasmic reticulum membrane"/>
    <property type="evidence" value="ECO:0000250"/>
    <property type="project" value="UniProtKB"/>
</dbReference>
<dbReference type="GO" id="GO:0045050">
    <property type="term" value="P:protein insertion into ER membrane by stop-transfer membrane-anchor sequence"/>
    <property type="evidence" value="ECO:0000250"/>
    <property type="project" value="UniProtKB"/>
</dbReference>
<dbReference type="GO" id="GO:0071816">
    <property type="term" value="P:tail-anchored membrane protein insertion into ER membrane"/>
    <property type="evidence" value="ECO:0000250"/>
    <property type="project" value="UniProtKB"/>
</dbReference>
<dbReference type="FunFam" id="1.25.40.10:FF:000074">
    <property type="entry name" value="ER membrane protein complex subunit 2"/>
    <property type="match status" value="1"/>
</dbReference>
<dbReference type="Gene3D" id="1.25.40.10">
    <property type="entry name" value="Tetratricopeptide repeat domain"/>
    <property type="match status" value="1"/>
</dbReference>
<dbReference type="InterPro" id="IPR039856">
    <property type="entry name" value="EMC2-like"/>
</dbReference>
<dbReference type="InterPro" id="IPR011990">
    <property type="entry name" value="TPR-like_helical_dom_sf"/>
</dbReference>
<dbReference type="InterPro" id="IPR055217">
    <property type="entry name" value="TPR_EMC2"/>
</dbReference>
<dbReference type="InterPro" id="IPR019734">
    <property type="entry name" value="TPR_rpt"/>
</dbReference>
<dbReference type="PANTHER" id="PTHR12760">
    <property type="entry name" value="TETRATRICOPEPTIDE REPEAT PROTEIN"/>
    <property type="match status" value="1"/>
</dbReference>
<dbReference type="Pfam" id="PF22890">
    <property type="entry name" value="TPR_EMC2"/>
    <property type="match status" value="1"/>
</dbReference>
<dbReference type="SUPFAM" id="SSF48452">
    <property type="entry name" value="TPR-like"/>
    <property type="match status" value="1"/>
</dbReference>
<dbReference type="PROSITE" id="PS50005">
    <property type="entry name" value="TPR"/>
    <property type="match status" value="2"/>
</dbReference>
<dbReference type="PROSITE" id="PS50293">
    <property type="entry name" value="TPR_REGION"/>
    <property type="match status" value="1"/>
</dbReference>
<feature type="chain" id="PRO_0000333735" description="ER membrane protein complex subunit 2">
    <location>
        <begin position="1"/>
        <end position="297"/>
    </location>
</feature>
<feature type="repeat" description="TPR 1" evidence="2">
    <location>
        <begin position="87"/>
        <end position="120"/>
    </location>
</feature>
<feature type="repeat" description="TPR 2" evidence="2">
    <location>
        <begin position="155"/>
        <end position="188"/>
    </location>
</feature>
<feature type="repeat" description="TPR 3" evidence="2">
    <location>
        <begin position="192"/>
        <end position="225"/>
    </location>
</feature>
<accession>Q5M7J9</accession>